<sequence length="319" mass="36397">MKSSHPVNFQQMILALQEYWASQGCVLLQPFDMEVGAGTFHPATFLRAIGPEPWRAAYVQPSRRPTDGRYGDNPNRTQHYYQFQVVLKPSPDDIQDIYLGSLKALGIDPLTHDIRFVEDNWEAPTLGSWGVGWEVWQDGMEITQFTYFQQIGGLECKPVTGEITYGLERLAMFLQGIDNMFDLVWTEGPNGRVTYGQIFQQNEVEMSAYNFEYANVEALFNFFDFYEKEASQLIEVHLPLAAYEMVLKASHTFNLLDARQAISVTERQRFILRVRKLAQAVAEAYYSAREKLGFPMLEEISSSSSRVLPLAGNDRVKGC</sequence>
<organism>
    <name type="scientific">Coxiella burnetii (strain RSA 331 / Henzerling II)</name>
    <dbReference type="NCBI Taxonomy" id="360115"/>
    <lineage>
        <taxon>Bacteria</taxon>
        <taxon>Pseudomonadati</taxon>
        <taxon>Pseudomonadota</taxon>
        <taxon>Gammaproteobacteria</taxon>
        <taxon>Legionellales</taxon>
        <taxon>Coxiellaceae</taxon>
        <taxon>Coxiella</taxon>
    </lineage>
</organism>
<gene>
    <name evidence="1" type="primary">glyQ</name>
    <name type="ordered locus">COXBURSA331_A2115</name>
</gene>
<proteinExistence type="inferred from homology"/>
<protein>
    <recommendedName>
        <fullName evidence="1">Glycine--tRNA ligase alpha subunit</fullName>
        <ecNumber evidence="1">6.1.1.14</ecNumber>
    </recommendedName>
    <alternativeName>
        <fullName evidence="1">Glycyl-tRNA synthetase alpha subunit</fullName>
        <shortName evidence="1">GlyRS</shortName>
    </alternativeName>
</protein>
<name>SYGA_COXBR</name>
<feature type="chain" id="PRO_1000078525" description="Glycine--tRNA ligase alpha subunit">
    <location>
        <begin position="1"/>
        <end position="319"/>
    </location>
</feature>
<dbReference type="EC" id="6.1.1.14" evidence="1"/>
<dbReference type="EMBL" id="CP000890">
    <property type="protein sequence ID" value="ABX78358.1"/>
    <property type="molecule type" value="Genomic_DNA"/>
</dbReference>
<dbReference type="RefSeq" id="WP_005769976.1">
    <property type="nucleotide sequence ID" value="NC_010117.1"/>
</dbReference>
<dbReference type="SMR" id="A9NB98"/>
<dbReference type="KEGG" id="cbs:COXBURSA331_A2115"/>
<dbReference type="HOGENOM" id="CLU_057066_1_0_6"/>
<dbReference type="GO" id="GO:0005829">
    <property type="term" value="C:cytosol"/>
    <property type="evidence" value="ECO:0007669"/>
    <property type="project" value="TreeGrafter"/>
</dbReference>
<dbReference type="GO" id="GO:0005524">
    <property type="term" value="F:ATP binding"/>
    <property type="evidence" value="ECO:0007669"/>
    <property type="project" value="UniProtKB-UniRule"/>
</dbReference>
<dbReference type="GO" id="GO:0004820">
    <property type="term" value="F:glycine-tRNA ligase activity"/>
    <property type="evidence" value="ECO:0007669"/>
    <property type="project" value="UniProtKB-UniRule"/>
</dbReference>
<dbReference type="GO" id="GO:0006426">
    <property type="term" value="P:glycyl-tRNA aminoacylation"/>
    <property type="evidence" value="ECO:0007669"/>
    <property type="project" value="UniProtKB-UniRule"/>
</dbReference>
<dbReference type="CDD" id="cd00733">
    <property type="entry name" value="GlyRS_alpha_core"/>
    <property type="match status" value="1"/>
</dbReference>
<dbReference type="FunFam" id="3.30.930.10:FF:000006">
    <property type="entry name" value="Glycine--tRNA ligase alpha subunit"/>
    <property type="match status" value="1"/>
</dbReference>
<dbReference type="Gene3D" id="3.30.930.10">
    <property type="entry name" value="Bira Bifunctional Protein, Domain 2"/>
    <property type="match status" value="1"/>
</dbReference>
<dbReference type="Gene3D" id="1.20.58.180">
    <property type="entry name" value="Class II aaRS and biotin synthetases, domain 2"/>
    <property type="match status" value="1"/>
</dbReference>
<dbReference type="HAMAP" id="MF_00254">
    <property type="entry name" value="Gly_tRNA_synth_alpha"/>
    <property type="match status" value="1"/>
</dbReference>
<dbReference type="InterPro" id="IPR045864">
    <property type="entry name" value="aa-tRNA-synth_II/BPL/LPL"/>
</dbReference>
<dbReference type="InterPro" id="IPR006194">
    <property type="entry name" value="Gly-tRNA-synth_heterodimer"/>
</dbReference>
<dbReference type="InterPro" id="IPR002310">
    <property type="entry name" value="Gly-tRNA_ligase_asu"/>
</dbReference>
<dbReference type="NCBIfam" id="TIGR00388">
    <property type="entry name" value="glyQ"/>
    <property type="match status" value="1"/>
</dbReference>
<dbReference type="NCBIfam" id="NF006827">
    <property type="entry name" value="PRK09348.1"/>
    <property type="match status" value="1"/>
</dbReference>
<dbReference type="PANTHER" id="PTHR30075:SF2">
    <property type="entry name" value="GLYCINE--TRNA LIGASE, CHLOROPLASTIC_MITOCHONDRIAL 2"/>
    <property type="match status" value="1"/>
</dbReference>
<dbReference type="PANTHER" id="PTHR30075">
    <property type="entry name" value="GLYCYL-TRNA SYNTHETASE"/>
    <property type="match status" value="1"/>
</dbReference>
<dbReference type="Pfam" id="PF02091">
    <property type="entry name" value="tRNA-synt_2e"/>
    <property type="match status" value="1"/>
</dbReference>
<dbReference type="PRINTS" id="PR01044">
    <property type="entry name" value="TRNASYNTHGA"/>
</dbReference>
<dbReference type="SUPFAM" id="SSF55681">
    <property type="entry name" value="Class II aaRS and biotin synthetases"/>
    <property type="match status" value="1"/>
</dbReference>
<dbReference type="PROSITE" id="PS50861">
    <property type="entry name" value="AA_TRNA_LIGASE_II_GLYAB"/>
    <property type="match status" value="1"/>
</dbReference>
<evidence type="ECO:0000255" key="1">
    <source>
        <dbReference type="HAMAP-Rule" id="MF_00254"/>
    </source>
</evidence>
<comment type="catalytic activity">
    <reaction evidence="1">
        <text>tRNA(Gly) + glycine + ATP = glycyl-tRNA(Gly) + AMP + diphosphate</text>
        <dbReference type="Rhea" id="RHEA:16013"/>
        <dbReference type="Rhea" id="RHEA-COMP:9664"/>
        <dbReference type="Rhea" id="RHEA-COMP:9683"/>
        <dbReference type="ChEBI" id="CHEBI:30616"/>
        <dbReference type="ChEBI" id="CHEBI:33019"/>
        <dbReference type="ChEBI" id="CHEBI:57305"/>
        <dbReference type="ChEBI" id="CHEBI:78442"/>
        <dbReference type="ChEBI" id="CHEBI:78522"/>
        <dbReference type="ChEBI" id="CHEBI:456215"/>
        <dbReference type="EC" id="6.1.1.14"/>
    </reaction>
</comment>
<comment type="subunit">
    <text evidence="1">Tetramer of two alpha and two beta subunits.</text>
</comment>
<comment type="subcellular location">
    <subcellularLocation>
        <location evidence="1">Cytoplasm</location>
    </subcellularLocation>
</comment>
<comment type="similarity">
    <text evidence="1">Belongs to the class-II aminoacyl-tRNA synthetase family.</text>
</comment>
<accession>A9NB98</accession>
<keyword id="KW-0030">Aminoacyl-tRNA synthetase</keyword>
<keyword id="KW-0067">ATP-binding</keyword>
<keyword id="KW-0963">Cytoplasm</keyword>
<keyword id="KW-0436">Ligase</keyword>
<keyword id="KW-0547">Nucleotide-binding</keyword>
<keyword id="KW-0648">Protein biosynthesis</keyword>
<reference key="1">
    <citation type="submission" date="2007-11" db="EMBL/GenBank/DDBJ databases">
        <title>Genome sequencing of phylogenetically and phenotypically diverse Coxiella burnetii isolates.</title>
        <authorList>
            <person name="Seshadri R."/>
            <person name="Samuel J.E."/>
        </authorList>
    </citation>
    <scope>NUCLEOTIDE SEQUENCE [LARGE SCALE GENOMIC DNA]</scope>
    <source>
        <strain>RSA 331 / Henzerling II</strain>
    </source>
</reference>